<dbReference type="EMBL" id="AM920689">
    <property type="protein sequence ID" value="CAP52391.1"/>
    <property type="molecule type" value="Genomic_DNA"/>
</dbReference>
<dbReference type="SMR" id="B0RX25"/>
<dbReference type="KEGG" id="xca:xcc-b100_3028"/>
<dbReference type="HOGENOM" id="CLU_066645_1_0_6"/>
<dbReference type="Proteomes" id="UP000001188">
    <property type="component" value="Chromosome"/>
</dbReference>
<dbReference type="GO" id="GO:0043590">
    <property type="term" value="C:bacterial nucleoid"/>
    <property type="evidence" value="ECO:0007669"/>
    <property type="project" value="TreeGrafter"/>
</dbReference>
<dbReference type="GO" id="GO:0006310">
    <property type="term" value="P:DNA recombination"/>
    <property type="evidence" value="ECO:0007669"/>
    <property type="project" value="UniProtKB-UniRule"/>
</dbReference>
<dbReference type="GO" id="GO:0006302">
    <property type="term" value="P:double-strand break repair"/>
    <property type="evidence" value="ECO:0007669"/>
    <property type="project" value="TreeGrafter"/>
</dbReference>
<dbReference type="Gene3D" id="2.40.50.140">
    <property type="entry name" value="Nucleic acid-binding proteins"/>
    <property type="match status" value="1"/>
</dbReference>
<dbReference type="Gene3D" id="1.20.1440.120">
    <property type="entry name" value="Recombination protein O, C-terminal domain"/>
    <property type="match status" value="1"/>
</dbReference>
<dbReference type="HAMAP" id="MF_00201">
    <property type="entry name" value="RecO"/>
    <property type="match status" value="1"/>
</dbReference>
<dbReference type="InterPro" id="IPR037278">
    <property type="entry name" value="ARFGAP/RecO"/>
</dbReference>
<dbReference type="InterPro" id="IPR022572">
    <property type="entry name" value="DNA_rep/recomb_RecO_N"/>
</dbReference>
<dbReference type="InterPro" id="IPR012340">
    <property type="entry name" value="NA-bd_OB-fold"/>
</dbReference>
<dbReference type="InterPro" id="IPR003717">
    <property type="entry name" value="RecO"/>
</dbReference>
<dbReference type="InterPro" id="IPR042242">
    <property type="entry name" value="RecO_C"/>
</dbReference>
<dbReference type="NCBIfam" id="TIGR00613">
    <property type="entry name" value="reco"/>
    <property type="match status" value="1"/>
</dbReference>
<dbReference type="PANTHER" id="PTHR33991">
    <property type="entry name" value="DNA REPAIR PROTEIN RECO"/>
    <property type="match status" value="1"/>
</dbReference>
<dbReference type="PANTHER" id="PTHR33991:SF1">
    <property type="entry name" value="DNA REPAIR PROTEIN RECO"/>
    <property type="match status" value="1"/>
</dbReference>
<dbReference type="Pfam" id="PF02565">
    <property type="entry name" value="RecO_C"/>
    <property type="match status" value="1"/>
</dbReference>
<dbReference type="Pfam" id="PF11967">
    <property type="entry name" value="RecO_N"/>
    <property type="match status" value="1"/>
</dbReference>
<dbReference type="SUPFAM" id="SSF57863">
    <property type="entry name" value="ArfGap/RecO-like zinc finger"/>
    <property type="match status" value="1"/>
</dbReference>
<dbReference type="SUPFAM" id="SSF50249">
    <property type="entry name" value="Nucleic acid-binding proteins"/>
    <property type="match status" value="1"/>
</dbReference>
<sequence length="241" mass="26774">MLIEHERGFVLHARAWRETSLLVEVLTEQHGRVGLLARGVHGPRKQALRAALQPLQLIQFTAVQRGELAQLRQAEAIDTAPRLLGEAMLAGFYISELLLRLAPRHAPVPELFDCYAQARAHLASGAALAWGLRQFERDVLDGLGFGFDLQHDSDGQPIDPAARYRLDPQDGARRVLSERLAQDRRETVTGAALLALGEDRVPATEDMPGLRRSMRGVLLHHLSGRGLKSWEMLEELARRGA</sequence>
<organism>
    <name type="scientific">Xanthomonas campestris pv. campestris (strain B100)</name>
    <dbReference type="NCBI Taxonomy" id="509169"/>
    <lineage>
        <taxon>Bacteria</taxon>
        <taxon>Pseudomonadati</taxon>
        <taxon>Pseudomonadota</taxon>
        <taxon>Gammaproteobacteria</taxon>
        <taxon>Lysobacterales</taxon>
        <taxon>Lysobacteraceae</taxon>
        <taxon>Xanthomonas</taxon>
    </lineage>
</organism>
<reference key="1">
    <citation type="journal article" date="2008" name="J. Biotechnol.">
        <title>The genome of Xanthomonas campestris pv. campestris B100 and its use for the reconstruction of metabolic pathways involved in xanthan biosynthesis.</title>
        <authorList>
            <person name="Vorhoelter F.-J."/>
            <person name="Schneiker S."/>
            <person name="Goesmann A."/>
            <person name="Krause L."/>
            <person name="Bekel T."/>
            <person name="Kaiser O."/>
            <person name="Linke B."/>
            <person name="Patschkowski T."/>
            <person name="Rueckert C."/>
            <person name="Schmid J."/>
            <person name="Sidhu V.K."/>
            <person name="Sieber V."/>
            <person name="Tauch A."/>
            <person name="Watt S.A."/>
            <person name="Weisshaar B."/>
            <person name="Becker A."/>
            <person name="Niehaus K."/>
            <person name="Puehler A."/>
        </authorList>
    </citation>
    <scope>NUCLEOTIDE SEQUENCE [LARGE SCALE GENOMIC DNA]</scope>
    <source>
        <strain>B100</strain>
    </source>
</reference>
<comment type="function">
    <text evidence="1">Involved in DNA repair and RecF pathway recombination.</text>
</comment>
<comment type="similarity">
    <text evidence="1">Belongs to the RecO family.</text>
</comment>
<evidence type="ECO:0000255" key="1">
    <source>
        <dbReference type="HAMAP-Rule" id="MF_00201"/>
    </source>
</evidence>
<gene>
    <name evidence="1" type="primary">recO</name>
    <name type="ordered locus">xcc-b100_3028</name>
</gene>
<proteinExistence type="inferred from homology"/>
<protein>
    <recommendedName>
        <fullName evidence="1">DNA repair protein RecO</fullName>
    </recommendedName>
    <alternativeName>
        <fullName evidence="1">Recombination protein O</fullName>
    </alternativeName>
</protein>
<name>RECO_XANCB</name>
<feature type="chain" id="PRO_1000099427" description="DNA repair protein RecO">
    <location>
        <begin position="1"/>
        <end position="241"/>
    </location>
</feature>
<keyword id="KW-0227">DNA damage</keyword>
<keyword id="KW-0233">DNA recombination</keyword>
<keyword id="KW-0234">DNA repair</keyword>
<accession>B0RX25</accession>